<sequence length="439" mass="50839">MCPQMKLNARQVETAKPKDKTYKMADGGGLYLEVSAKGSKYWRMKYRRPSDKKEDRLAFGVWPTVTLAQARAKRDEAKKLLVQGIDPKVVQKEARAENSGAYTFEAIAREWHASNKRWSEDHRSRVLRYLELYIFPHIGSSDIRQLKTSHLLAPIKKVDASGKHDVAQRLQQRVTAIMRYAVQNDYIDSNPASDMAGALSTTKARHYPALPSSRFPEFLARLAAYRGRVMTRIAVKLSLLTFVRSSELRFARWDEFDFDKSLWRIPAKREEIKGVRYSYRGMKMKEEHIVPLSRQAMILLNQLKQISGDKELLFPGDHDATKVMSENTVNSALRAMGYDTKTEVCGHGFRTMARGALGESGLWSDDAIERQLSHSERNNVRAAYIHTSEHLDERRLMMQWWADYLDMNRNKYISLMIIQNTKKYLNKNSYWLIFKMSVK</sequence>
<dbReference type="EC" id="2.7.7.-" evidence="1"/>
<dbReference type="EC" id="3.1.-.-" evidence="1"/>
<dbReference type="EMBL" id="X51522">
    <property type="protein sequence ID" value="CAA35897.1"/>
    <property type="molecule type" value="Genomic_DNA"/>
</dbReference>
<dbReference type="EMBL" id="X05947">
    <property type="protein sequence ID" value="CAA29379.1"/>
    <property type="status" value="ALT_SEQ"/>
    <property type="molecule type" value="Genomic_DNA"/>
</dbReference>
<dbReference type="EMBL" id="M27748">
    <property type="protein sequence ID" value="AAA32430.1"/>
    <property type="molecule type" value="Genomic_DNA"/>
</dbReference>
<dbReference type="PIR" id="JW0023">
    <property type="entry name" value="RSBPP4"/>
</dbReference>
<dbReference type="RefSeq" id="NP_042035.1">
    <property type="nucleotide sequence ID" value="NC_001609.1"/>
</dbReference>
<dbReference type="SMR" id="P08320"/>
<dbReference type="KEGG" id="vg:1261092"/>
<dbReference type="OrthoDB" id="3050at10239"/>
<dbReference type="Proteomes" id="UP000009093">
    <property type="component" value="Genome"/>
</dbReference>
<dbReference type="GO" id="GO:0003677">
    <property type="term" value="F:DNA binding"/>
    <property type="evidence" value="ECO:0007669"/>
    <property type="project" value="UniProtKB-KW"/>
</dbReference>
<dbReference type="GO" id="GO:0016787">
    <property type="term" value="F:hydrolase activity"/>
    <property type="evidence" value="ECO:0007669"/>
    <property type="project" value="UniProtKB-KW"/>
</dbReference>
<dbReference type="GO" id="GO:0016740">
    <property type="term" value="F:transferase activity"/>
    <property type="evidence" value="ECO:0007669"/>
    <property type="project" value="UniProtKB-KW"/>
</dbReference>
<dbReference type="GO" id="GO:0015074">
    <property type="term" value="P:DNA integration"/>
    <property type="evidence" value="ECO:0007669"/>
    <property type="project" value="UniProtKB-KW"/>
</dbReference>
<dbReference type="GO" id="GO:0006310">
    <property type="term" value="P:DNA recombination"/>
    <property type="evidence" value="ECO:0007669"/>
    <property type="project" value="UniProtKB-KW"/>
</dbReference>
<dbReference type="GO" id="GO:0039695">
    <property type="term" value="P:DNA-templated viral transcription"/>
    <property type="evidence" value="ECO:0000315"/>
    <property type="project" value="CACAO"/>
</dbReference>
<dbReference type="GO" id="GO:0075713">
    <property type="term" value="P:establishment of integrated proviral latency"/>
    <property type="evidence" value="ECO:0007669"/>
    <property type="project" value="UniProtKB-KW"/>
</dbReference>
<dbReference type="GO" id="GO:0046718">
    <property type="term" value="P:symbiont entry into host cell"/>
    <property type="evidence" value="ECO:0007669"/>
    <property type="project" value="UniProtKB-KW"/>
</dbReference>
<dbReference type="GO" id="GO:0044826">
    <property type="term" value="P:viral genome integration into host DNA"/>
    <property type="evidence" value="ECO:0007669"/>
    <property type="project" value="UniProtKB-KW"/>
</dbReference>
<dbReference type="CDD" id="cd00801">
    <property type="entry name" value="INT_P4_C"/>
    <property type="match status" value="1"/>
</dbReference>
<dbReference type="Gene3D" id="1.10.150.130">
    <property type="match status" value="1"/>
</dbReference>
<dbReference type="Gene3D" id="3.30.160.390">
    <property type="entry name" value="Integrase, DNA-binding domain"/>
    <property type="match status" value="1"/>
</dbReference>
<dbReference type="Gene3D" id="1.10.443.10">
    <property type="entry name" value="Intergrase catalytic core"/>
    <property type="match status" value="1"/>
</dbReference>
<dbReference type="InterPro" id="IPR044068">
    <property type="entry name" value="CB"/>
</dbReference>
<dbReference type="InterPro" id="IPR011010">
    <property type="entry name" value="DNA_brk_join_enz"/>
</dbReference>
<dbReference type="InterPro" id="IPR013762">
    <property type="entry name" value="Integrase-like_cat_sf"/>
</dbReference>
<dbReference type="InterPro" id="IPR002104">
    <property type="entry name" value="Integrase_catalytic"/>
</dbReference>
<dbReference type="InterPro" id="IPR038488">
    <property type="entry name" value="Integrase_DNA-bd_sf"/>
</dbReference>
<dbReference type="InterPro" id="IPR025166">
    <property type="entry name" value="Integrase_DNA_bind_dom"/>
</dbReference>
<dbReference type="InterPro" id="IPR010998">
    <property type="entry name" value="Integrase_recombinase_N"/>
</dbReference>
<dbReference type="InterPro" id="IPR053876">
    <property type="entry name" value="Phage_int_M"/>
</dbReference>
<dbReference type="InterPro" id="IPR050808">
    <property type="entry name" value="Phage_Integrase"/>
</dbReference>
<dbReference type="PANTHER" id="PTHR30629">
    <property type="entry name" value="PROPHAGE INTEGRASE"/>
    <property type="match status" value="1"/>
</dbReference>
<dbReference type="PANTHER" id="PTHR30629:SF9">
    <property type="entry name" value="PROTEIN INTB-RELATED"/>
    <property type="match status" value="1"/>
</dbReference>
<dbReference type="Pfam" id="PF13356">
    <property type="entry name" value="Arm-DNA-bind_3"/>
    <property type="match status" value="1"/>
</dbReference>
<dbReference type="Pfam" id="PF22022">
    <property type="entry name" value="Phage_int_M"/>
    <property type="match status" value="1"/>
</dbReference>
<dbReference type="Pfam" id="PF00589">
    <property type="entry name" value="Phage_integrase"/>
    <property type="match status" value="1"/>
</dbReference>
<dbReference type="SUPFAM" id="SSF56349">
    <property type="entry name" value="DNA breaking-rejoining enzymes"/>
    <property type="match status" value="1"/>
</dbReference>
<dbReference type="PROSITE" id="PS51900">
    <property type="entry name" value="CB"/>
    <property type="match status" value="1"/>
</dbReference>
<dbReference type="PROSITE" id="PS51898">
    <property type="entry name" value="TYR_RECOMBINASE"/>
    <property type="match status" value="1"/>
</dbReference>
<gene>
    <name type="primary">int</name>
</gene>
<comment type="function">
    <text>Integrase is necessary for integration of the phage into the host genome by site-specific recombination.</text>
</comment>
<comment type="similarity">
    <text evidence="4">Belongs to the 'phage' integrase family.</text>
</comment>
<keyword id="KW-0229">DNA integration</keyword>
<keyword id="KW-0233">DNA recombination</keyword>
<keyword id="KW-0238">DNA-binding</keyword>
<keyword id="KW-0378">Hydrolase</keyword>
<keyword id="KW-1185">Reference proteome</keyword>
<keyword id="KW-0808">Transferase</keyword>
<keyword id="KW-1179">Viral genome integration</keyword>
<keyword id="KW-1160">Virus entry into host cell</keyword>
<name>VINT_BPP4</name>
<organismHost>
    <name type="scientific">Escherichia coli</name>
    <dbReference type="NCBI Taxonomy" id="562"/>
</organismHost>
<organism>
    <name type="scientific">Enterobacteria phage P4</name>
    <name type="common">Bacteriophage P4</name>
    <dbReference type="NCBI Taxonomy" id="10680"/>
    <lineage>
        <taxon>Viruses</taxon>
        <taxon>Duplodnaviria</taxon>
        <taxon>Heunggongvirae</taxon>
        <taxon>Uroviricota</taxon>
        <taxon>Caudoviricetes</taxon>
    </lineage>
</organism>
<evidence type="ECO:0000250" key="1">
    <source>
        <dbReference type="UniProtKB" id="P36932"/>
    </source>
</evidence>
<evidence type="ECO:0000255" key="2">
    <source>
        <dbReference type="PROSITE-ProRule" id="PRU01246"/>
    </source>
</evidence>
<evidence type="ECO:0000255" key="3">
    <source>
        <dbReference type="PROSITE-ProRule" id="PRU01248"/>
    </source>
</evidence>
<evidence type="ECO:0000305" key="4"/>
<accession>P08320</accession>
<proteinExistence type="inferred from homology"/>
<reference key="1">
    <citation type="journal article" date="1990" name="Nucleic Acids Res.">
        <title>DNA sequence of satellite bacteriophage P4.</title>
        <authorList>
            <person name="Halling C."/>
            <person name="Calendar R."/>
            <person name="Christie G.E."/>
            <person name="Dale E.C."/>
            <person name="Deho G."/>
            <person name="Finkel S."/>
            <person name="Flensburg J."/>
            <person name="Ghisotti D."/>
            <person name="Kahn M.L."/>
            <person name="Lane K.B."/>
            <person name="Lin C.-S."/>
            <person name="Lindqvist B.H."/>
            <person name="Pierson L.S."/>
            <person name="Six E.W."/>
            <person name="Sunshine M.G."/>
            <person name="Ziermann R."/>
        </authorList>
    </citation>
    <scope>NUCLEOTIDE SEQUENCE [LARGE SCALE GENOMIC DNA]</scope>
</reference>
<reference key="2">
    <citation type="journal article" date="1987" name="J. Mol. Biol.">
        <title>Integration of satellite bacteriophage P4 in Escherichia coli. DNA sequences of the phage and host regions involved in site-specific recombination.</title>
        <authorList>
            <person name="Pierson L.S."/>
            <person name="Kahn M.L."/>
        </authorList>
    </citation>
    <scope>NUCLEOTIDE SEQUENCE [GENOMIC DNA]</scope>
</reference>
<reference key="3">
    <citation type="submission" date="1994-01" db="EMBL/GenBank/DDBJ databases">
        <authorList>
            <person name="Halling C.H."/>
        </authorList>
    </citation>
    <scope>SEQUENCE REVISION</scope>
</reference>
<reference key="4">
    <citation type="journal article" date="1990" name="J. Virol.">
        <title>Nonessential region of bacteriophage P4: DNA sequence, transcription, gene products, and functions.</title>
        <authorList>
            <person name="Ghisotti D."/>
            <person name="Finkel S."/>
            <person name="Halling C."/>
            <person name="Deho G."/>
            <person name="Sironi G."/>
            <person name="Calendar R."/>
        </authorList>
    </citation>
    <scope>NUCLEOTIDE SEQUENCE [GENOMIC DNA] OF 430-439</scope>
</reference>
<feature type="chain" id="PRO_0000197507" description="Integrase">
    <location>
        <begin position="1"/>
        <end position="439"/>
    </location>
</feature>
<feature type="domain" description="Core-binding (CB)" evidence="3">
    <location>
        <begin position="102"/>
        <end position="182"/>
    </location>
</feature>
<feature type="domain" description="Tyr recombinase" evidence="2">
    <location>
        <begin position="205"/>
        <end position="398"/>
    </location>
</feature>
<feature type="active site" evidence="2">
    <location>
        <position position="244"/>
    </location>
</feature>
<feature type="active site" evidence="2">
    <location>
        <position position="273"/>
    </location>
</feature>
<feature type="active site" evidence="2">
    <location>
        <position position="347"/>
    </location>
</feature>
<feature type="active site" evidence="2">
    <location>
        <position position="350"/>
    </location>
</feature>
<feature type="active site" evidence="2">
    <location>
        <position position="374"/>
    </location>
</feature>
<feature type="active site" description="O-(3'-phospho-DNA)-tyrosine intermediate" evidence="2">
    <location>
        <position position="384"/>
    </location>
</feature>
<protein>
    <recommendedName>
        <fullName>Integrase</fullName>
        <ecNumber evidence="1">2.7.7.-</ecNumber>
        <ecNumber evidence="1">3.1.-.-</ecNumber>
    </recommendedName>
</protein>